<proteinExistence type="inferred from homology"/>
<gene>
    <name evidence="1" type="primary">dnaA</name>
    <name type="ordered locus">LBUL_0001</name>
</gene>
<name>DNAA_LACDB</name>
<keyword id="KW-0067">ATP-binding</keyword>
<keyword id="KW-0963">Cytoplasm</keyword>
<keyword id="KW-0235">DNA replication</keyword>
<keyword id="KW-0238">DNA-binding</keyword>
<keyword id="KW-0446">Lipid-binding</keyword>
<keyword id="KW-0547">Nucleotide-binding</keyword>
<evidence type="ECO:0000255" key="1">
    <source>
        <dbReference type="HAMAP-Rule" id="MF_00377"/>
    </source>
</evidence>
<evidence type="ECO:0000256" key="2">
    <source>
        <dbReference type="SAM" id="MobiDB-lite"/>
    </source>
</evidence>
<reference key="1">
    <citation type="journal article" date="2006" name="Proc. Natl. Acad. Sci. U.S.A.">
        <title>Comparative genomics of the lactic acid bacteria.</title>
        <authorList>
            <person name="Makarova K.S."/>
            <person name="Slesarev A."/>
            <person name="Wolf Y.I."/>
            <person name="Sorokin A."/>
            <person name="Mirkin B."/>
            <person name="Koonin E.V."/>
            <person name="Pavlov A."/>
            <person name="Pavlova N."/>
            <person name="Karamychev V."/>
            <person name="Polouchine N."/>
            <person name="Shakhova V."/>
            <person name="Grigoriev I."/>
            <person name="Lou Y."/>
            <person name="Rohksar D."/>
            <person name="Lucas S."/>
            <person name="Huang K."/>
            <person name="Goodstein D.M."/>
            <person name="Hawkins T."/>
            <person name="Plengvidhya V."/>
            <person name="Welker D."/>
            <person name="Hughes J."/>
            <person name="Goh Y."/>
            <person name="Benson A."/>
            <person name="Baldwin K."/>
            <person name="Lee J.-H."/>
            <person name="Diaz-Muniz I."/>
            <person name="Dosti B."/>
            <person name="Smeianov V."/>
            <person name="Wechter W."/>
            <person name="Barabote R."/>
            <person name="Lorca G."/>
            <person name="Altermann E."/>
            <person name="Barrangou R."/>
            <person name="Ganesan B."/>
            <person name="Xie Y."/>
            <person name="Rawsthorne H."/>
            <person name="Tamir D."/>
            <person name="Parker C."/>
            <person name="Breidt F."/>
            <person name="Broadbent J.R."/>
            <person name="Hutkins R."/>
            <person name="O'Sullivan D."/>
            <person name="Steele J."/>
            <person name="Unlu G."/>
            <person name="Saier M.H. Jr."/>
            <person name="Klaenhammer T."/>
            <person name="Richardson P."/>
            <person name="Kozyavkin S."/>
            <person name="Weimer B.C."/>
            <person name="Mills D.A."/>
        </authorList>
    </citation>
    <scope>NUCLEOTIDE SEQUENCE [LARGE SCALE GENOMIC DNA]</scope>
    <source>
        <strain>ATCC BAA-365 / Lb-18</strain>
    </source>
</reference>
<accession>Q04CX5</accession>
<comment type="function">
    <text evidence="1">Plays an essential role in the initiation and regulation of chromosomal replication. ATP-DnaA binds to the origin of replication (oriC) to initiate formation of the DNA replication initiation complex once per cell cycle. Binds the DnaA box (a 9 base pair repeat at the origin) and separates the double-stranded (ds)DNA. Forms a right-handed helical filament on oriC DNA; dsDNA binds to the exterior of the filament while single-stranded (ss)DNA is stabiized in the filament's interior. The ATP-DnaA-oriC complex binds and stabilizes one strand of the AT-rich DNA unwinding element (DUE), permitting loading of DNA polymerase. After initiation quickly degrades to an ADP-DnaA complex that is not apt for DNA replication. Binds acidic phospholipids.</text>
</comment>
<comment type="subunit">
    <text evidence="1">Oligomerizes as a right-handed, spiral filament on DNA at oriC.</text>
</comment>
<comment type="subcellular location">
    <subcellularLocation>
        <location evidence="1">Cytoplasm</location>
    </subcellularLocation>
</comment>
<comment type="domain">
    <text evidence="1">Domain I is involved in oligomerization and binding regulators, domain II is flexibile and of varying length in different bacteria, domain III forms the AAA+ region, while domain IV binds dsDNA.</text>
</comment>
<comment type="similarity">
    <text evidence="1">Belongs to the DnaA family.</text>
</comment>
<feature type="chain" id="PRO_1000048662" description="Chromosomal replication initiator protein DnaA">
    <location>
        <begin position="1"/>
        <end position="454"/>
    </location>
</feature>
<feature type="region of interest" description="Domain I, interacts with DnaA modulators" evidence="1">
    <location>
        <begin position="1"/>
        <end position="74"/>
    </location>
</feature>
<feature type="region of interest" description="Domain II" evidence="1">
    <location>
        <begin position="74"/>
        <end position="116"/>
    </location>
</feature>
<feature type="region of interest" description="Disordered" evidence="2">
    <location>
        <begin position="88"/>
        <end position="112"/>
    </location>
</feature>
<feature type="region of interest" description="Domain III, AAA+ region" evidence="1">
    <location>
        <begin position="117"/>
        <end position="333"/>
    </location>
</feature>
<feature type="region of interest" description="Domain IV, binds dsDNA" evidence="1">
    <location>
        <begin position="334"/>
        <end position="454"/>
    </location>
</feature>
<feature type="compositionally biased region" description="Basic and acidic residues" evidence="2">
    <location>
        <begin position="101"/>
        <end position="112"/>
    </location>
</feature>
<feature type="binding site" evidence="1">
    <location>
        <position position="161"/>
    </location>
    <ligand>
        <name>ATP</name>
        <dbReference type="ChEBI" id="CHEBI:30616"/>
    </ligand>
</feature>
<feature type="binding site" evidence="1">
    <location>
        <position position="163"/>
    </location>
    <ligand>
        <name>ATP</name>
        <dbReference type="ChEBI" id="CHEBI:30616"/>
    </ligand>
</feature>
<feature type="binding site" evidence="1">
    <location>
        <position position="164"/>
    </location>
    <ligand>
        <name>ATP</name>
        <dbReference type="ChEBI" id="CHEBI:30616"/>
    </ligand>
</feature>
<feature type="binding site" evidence="1">
    <location>
        <position position="165"/>
    </location>
    <ligand>
        <name>ATP</name>
        <dbReference type="ChEBI" id="CHEBI:30616"/>
    </ligand>
</feature>
<protein>
    <recommendedName>
        <fullName evidence="1">Chromosomal replication initiator protein DnaA</fullName>
    </recommendedName>
</protein>
<organism>
    <name type="scientific">Lactobacillus delbrueckii subsp. bulgaricus (strain ATCC BAA-365 / Lb-18)</name>
    <dbReference type="NCBI Taxonomy" id="321956"/>
    <lineage>
        <taxon>Bacteria</taxon>
        <taxon>Bacillati</taxon>
        <taxon>Bacillota</taxon>
        <taxon>Bacilli</taxon>
        <taxon>Lactobacillales</taxon>
        <taxon>Lactobacillaceae</taxon>
        <taxon>Lactobacillus</taxon>
    </lineage>
</organism>
<sequence length="454" mass="51559">MFDLEKFWDSFNAEMRSEFNEVSYNAWFKNTKPVSFNKDTHELVISVQTPVAKGYWEQNISANLIQSAYAYAGIDIYPVFVVKNGPTPSSERMLEPQPQAKPEKARPQGREFTKDLRLNEKYTFENFIQGEGNKLAAGAALAVADNPGTFYNPLFIFGGVGLGKTHLMQAIGHQMLAERPDAKVVYIQSETFVNDFINSIKNKTQDKFREKYRTADLLLVDDIQFFAKKEGIQEEFFHTFETLYNDQKQIVMTSDRLPTEIPDLSERLVSRFAWGLQVEITPPDLETRIAILRKKAESEGLEIDESTLDYVASQVDTNIRELEGALVKVQAQATIQKQDINIGLARSALADLKLVQKSRGLQISKIQEVVANYFQTSVPDLKGKKRVRQIVIPRQIAMYLSRELTDASLPKIGQEFGGKDHTTVMHACDKIARQIKTDTEIKSAVSDLRQMLER</sequence>
<dbReference type="EMBL" id="CP000412">
    <property type="protein sequence ID" value="ABJ57697.1"/>
    <property type="molecule type" value="Genomic_DNA"/>
</dbReference>
<dbReference type="RefSeq" id="WP_003622141.1">
    <property type="nucleotide sequence ID" value="NC_008529.1"/>
</dbReference>
<dbReference type="SMR" id="Q04CX5"/>
<dbReference type="KEGG" id="lbu:LBUL_0001"/>
<dbReference type="HOGENOM" id="CLU_026910_3_1_9"/>
<dbReference type="BioCyc" id="LDEL321956:LBUL_RS00005-MONOMER"/>
<dbReference type="GO" id="GO:0005737">
    <property type="term" value="C:cytoplasm"/>
    <property type="evidence" value="ECO:0007669"/>
    <property type="project" value="UniProtKB-SubCell"/>
</dbReference>
<dbReference type="GO" id="GO:0005886">
    <property type="term" value="C:plasma membrane"/>
    <property type="evidence" value="ECO:0007669"/>
    <property type="project" value="TreeGrafter"/>
</dbReference>
<dbReference type="GO" id="GO:0005524">
    <property type="term" value="F:ATP binding"/>
    <property type="evidence" value="ECO:0007669"/>
    <property type="project" value="UniProtKB-UniRule"/>
</dbReference>
<dbReference type="GO" id="GO:0016887">
    <property type="term" value="F:ATP hydrolysis activity"/>
    <property type="evidence" value="ECO:0007669"/>
    <property type="project" value="InterPro"/>
</dbReference>
<dbReference type="GO" id="GO:0003688">
    <property type="term" value="F:DNA replication origin binding"/>
    <property type="evidence" value="ECO:0007669"/>
    <property type="project" value="UniProtKB-UniRule"/>
</dbReference>
<dbReference type="GO" id="GO:0008289">
    <property type="term" value="F:lipid binding"/>
    <property type="evidence" value="ECO:0007669"/>
    <property type="project" value="UniProtKB-KW"/>
</dbReference>
<dbReference type="GO" id="GO:0006270">
    <property type="term" value="P:DNA replication initiation"/>
    <property type="evidence" value="ECO:0007669"/>
    <property type="project" value="UniProtKB-UniRule"/>
</dbReference>
<dbReference type="GO" id="GO:0006275">
    <property type="term" value="P:regulation of DNA replication"/>
    <property type="evidence" value="ECO:0007669"/>
    <property type="project" value="UniProtKB-UniRule"/>
</dbReference>
<dbReference type="CDD" id="cd00009">
    <property type="entry name" value="AAA"/>
    <property type="match status" value="1"/>
</dbReference>
<dbReference type="CDD" id="cd06571">
    <property type="entry name" value="Bac_DnaA_C"/>
    <property type="match status" value="1"/>
</dbReference>
<dbReference type="FunFam" id="1.10.1750.10:FF:000002">
    <property type="entry name" value="Chromosomal replication initiator protein DnaA"/>
    <property type="match status" value="1"/>
</dbReference>
<dbReference type="FunFam" id="3.40.50.300:FF:000668">
    <property type="entry name" value="Chromosomal replication initiator protein DnaA"/>
    <property type="match status" value="1"/>
</dbReference>
<dbReference type="Gene3D" id="1.10.1750.10">
    <property type="match status" value="1"/>
</dbReference>
<dbReference type="Gene3D" id="1.10.8.60">
    <property type="match status" value="1"/>
</dbReference>
<dbReference type="Gene3D" id="3.30.300.180">
    <property type="match status" value="1"/>
</dbReference>
<dbReference type="Gene3D" id="3.40.50.300">
    <property type="entry name" value="P-loop containing nucleotide triphosphate hydrolases"/>
    <property type="match status" value="1"/>
</dbReference>
<dbReference type="HAMAP" id="MF_00377">
    <property type="entry name" value="DnaA_bact"/>
    <property type="match status" value="1"/>
</dbReference>
<dbReference type="InterPro" id="IPR003593">
    <property type="entry name" value="AAA+_ATPase"/>
</dbReference>
<dbReference type="InterPro" id="IPR001957">
    <property type="entry name" value="Chromosome_initiator_DnaA"/>
</dbReference>
<dbReference type="InterPro" id="IPR020591">
    <property type="entry name" value="Chromosome_initiator_DnaA-like"/>
</dbReference>
<dbReference type="InterPro" id="IPR018312">
    <property type="entry name" value="Chromosome_initiator_DnaA_CS"/>
</dbReference>
<dbReference type="InterPro" id="IPR013159">
    <property type="entry name" value="DnaA_C"/>
</dbReference>
<dbReference type="InterPro" id="IPR013317">
    <property type="entry name" value="DnaA_dom"/>
</dbReference>
<dbReference type="InterPro" id="IPR024633">
    <property type="entry name" value="DnaA_N_dom"/>
</dbReference>
<dbReference type="InterPro" id="IPR038454">
    <property type="entry name" value="DnaA_N_sf"/>
</dbReference>
<dbReference type="InterPro" id="IPR027417">
    <property type="entry name" value="P-loop_NTPase"/>
</dbReference>
<dbReference type="InterPro" id="IPR010921">
    <property type="entry name" value="Trp_repressor/repl_initiator"/>
</dbReference>
<dbReference type="NCBIfam" id="TIGR00362">
    <property type="entry name" value="DnaA"/>
    <property type="match status" value="1"/>
</dbReference>
<dbReference type="PANTHER" id="PTHR30050">
    <property type="entry name" value="CHROMOSOMAL REPLICATION INITIATOR PROTEIN DNAA"/>
    <property type="match status" value="1"/>
</dbReference>
<dbReference type="PANTHER" id="PTHR30050:SF2">
    <property type="entry name" value="CHROMOSOMAL REPLICATION INITIATOR PROTEIN DNAA"/>
    <property type="match status" value="1"/>
</dbReference>
<dbReference type="Pfam" id="PF00308">
    <property type="entry name" value="Bac_DnaA"/>
    <property type="match status" value="1"/>
</dbReference>
<dbReference type="Pfam" id="PF08299">
    <property type="entry name" value="Bac_DnaA_C"/>
    <property type="match status" value="1"/>
</dbReference>
<dbReference type="Pfam" id="PF11638">
    <property type="entry name" value="DnaA_N"/>
    <property type="match status" value="1"/>
</dbReference>
<dbReference type="PRINTS" id="PR00051">
    <property type="entry name" value="DNAA"/>
</dbReference>
<dbReference type="SMART" id="SM00382">
    <property type="entry name" value="AAA"/>
    <property type="match status" value="1"/>
</dbReference>
<dbReference type="SMART" id="SM00760">
    <property type="entry name" value="Bac_DnaA_C"/>
    <property type="match status" value="1"/>
</dbReference>
<dbReference type="SUPFAM" id="SSF52540">
    <property type="entry name" value="P-loop containing nucleoside triphosphate hydrolases"/>
    <property type="match status" value="1"/>
</dbReference>
<dbReference type="SUPFAM" id="SSF48295">
    <property type="entry name" value="TrpR-like"/>
    <property type="match status" value="1"/>
</dbReference>
<dbReference type="PROSITE" id="PS01008">
    <property type="entry name" value="DNAA"/>
    <property type="match status" value="1"/>
</dbReference>